<gene>
    <name evidence="1" type="primary">queF</name>
    <name type="ordered locus">Rleg2_2808</name>
</gene>
<protein>
    <recommendedName>
        <fullName evidence="1">NADPH-dependent 7-cyano-7-deazaguanine reductase</fullName>
        <ecNumber evidence="1">1.7.1.13</ecNumber>
    </recommendedName>
    <alternativeName>
        <fullName evidence="1">7-cyano-7-carbaguanine reductase</fullName>
    </alternativeName>
    <alternativeName>
        <fullName evidence="1">NADPH-dependent nitrile oxidoreductase</fullName>
    </alternativeName>
    <alternativeName>
        <fullName evidence="1">PreQ(0) reductase</fullName>
    </alternativeName>
</protein>
<evidence type="ECO:0000255" key="1">
    <source>
        <dbReference type="HAMAP-Rule" id="MF_00818"/>
    </source>
</evidence>
<evidence type="ECO:0000256" key="2">
    <source>
        <dbReference type="SAM" id="MobiDB-lite"/>
    </source>
</evidence>
<comment type="function">
    <text evidence="1">Catalyzes the NADPH-dependent reduction of 7-cyano-7-deazaguanine (preQ0) to 7-aminomethyl-7-deazaguanine (preQ1).</text>
</comment>
<comment type="catalytic activity">
    <reaction evidence="1">
        <text>7-aminomethyl-7-carbaguanine + 2 NADP(+) = 7-cyano-7-deazaguanine + 2 NADPH + 3 H(+)</text>
        <dbReference type="Rhea" id="RHEA:13409"/>
        <dbReference type="ChEBI" id="CHEBI:15378"/>
        <dbReference type="ChEBI" id="CHEBI:45075"/>
        <dbReference type="ChEBI" id="CHEBI:57783"/>
        <dbReference type="ChEBI" id="CHEBI:58349"/>
        <dbReference type="ChEBI" id="CHEBI:58703"/>
        <dbReference type="EC" id="1.7.1.13"/>
    </reaction>
</comment>
<comment type="pathway">
    <text evidence="1">tRNA modification; tRNA-queuosine biosynthesis.</text>
</comment>
<comment type="subcellular location">
    <subcellularLocation>
        <location evidence="1">Cytoplasm</location>
    </subcellularLocation>
</comment>
<comment type="similarity">
    <text evidence="1">Belongs to the GTP cyclohydrolase I family. QueF type 1 subfamily.</text>
</comment>
<organism>
    <name type="scientific">Rhizobium leguminosarum bv. trifolii (strain WSM2304)</name>
    <dbReference type="NCBI Taxonomy" id="395492"/>
    <lineage>
        <taxon>Bacteria</taxon>
        <taxon>Pseudomonadati</taxon>
        <taxon>Pseudomonadota</taxon>
        <taxon>Alphaproteobacteria</taxon>
        <taxon>Hyphomicrobiales</taxon>
        <taxon>Rhizobiaceae</taxon>
        <taxon>Rhizobium/Agrobacterium group</taxon>
        <taxon>Rhizobium</taxon>
    </lineage>
</organism>
<keyword id="KW-0963">Cytoplasm</keyword>
<keyword id="KW-0521">NADP</keyword>
<keyword id="KW-0560">Oxidoreductase</keyword>
<keyword id="KW-0671">Queuosine biosynthesis</keyword>
<keyword id="KW-1185">Reference proteome</keyword>
<accession>B5ZY95</accession>
<dbReference type="EC" id="1.7.1.13" evidence="1"/>
<dbReference type="EMBL" id="CP001191">
    <property type="protein sequence ID" value="ACI56078.1"/>
    <property type="molecule type" value="Genomic_DNA"/>
</dbReference>
<dbReference type="RefSeq" id="WP_003581211.1">
    <property type="nucleotide sequence ID" value="NC_011369.1"/>
</dbReference>
<dbReference type="SMR" id="B5ZY95"/>
<dbReference type="STRING" id="395492.Rleg2_2808"/>
<dbReference type="KEGG" id="rlt:Rleg2_2808"/>
<dbReference type="eggNOG" id="COG0780">
    <property type="taxonomic scope" value="Bacteria"/>
</dbReference>
<dbReference type="HOGENOM" id="CLU_102489_0_1_5"/>
<dbReference type="UniPathway" id="UPA00392"/>
<dbReference type="Proteomes" id="UP000008330">
    <property type="component" value="Chromosome"/>
</dbReference>
<dbReference type="GO" id="GO:0005737">
    <property type="term" value="C:cytoplasm"/>
    <property type="evidence" value="ECO:0007669"/>
    <property type="project" value="UniProtKB-SubCell"/>
</dbReference>
<dbReference type="GO" id="GO:0033739">
    <property type="term" value="F:preQ1 synthase activity"/>
    <property type="evidence" value="ECO:0007669"/>
    <property type="project" value="UniProtKB-UniRule"/>
</dbReference>
<dbReference type="GO" id="GO:0008616">
    <property type="term" value="P:queuosine biosynthetic process"/>
    <property type="evidence" value="ECO:0007669"/>
    <property type="project" value="UniProtKB-UniRule"/>
</dbReference>
<dbReference type="GO" id="GO:0006400">
    <property type="term" value="P:tRNA modification"/>
    <property type="evidence" value="ECO:0007669"/>
    <property type="project" value="UniProtKB-UniRule"/>
</dbReference>
<dbReference type="Gene3D" id="3.30.1130.10">
    <property type="match status" value="1"/>
</dbReference>
<dbReference type="HAMAP" id="MF_00818">
    <property type="entry name" value="QueF_type1"/>
    <property type="match status" value="1"/>
</dbReference>
<dbReference type="InterPro" id="IPR043133">
    <property type="entry name" value="GTP-CH-I_C/QueF"/>
</dbReference>
<dbReference type="InterPro" id="IPR050084">
    <property type="entry name" value="NADPH_dep_7-cyano-7-deazaG_red"/>
</dbReference>
<dbReference type="InterPro" id="IPR029500">
    <property type="entry name" value="QueF"/>
</dbReference>
<dbReference type="InterPro" id="IPR016856">
    <property type="entry name" value="QueF_type1"/>
</dbReference>
<dbReference type="NCBIfam" id="TIGR03139">
    <property type="entry name" value="QueF-II"/>
    <property type="match status" value="1"/>
</dbReference>
<dbReference type="PANTHER" id="PTHR34354">
    <property type="entry name" value="NADPH-DEPENDENT 7-CYANO-7-DEAZAGUANINE REDUCTASE"/>
    <property type="match status" value="1"/>
</dbReference>
<dbReference type="PANTHER" id="PTHR34354:SF1">
    <property type="entry name" value="NADPH-DEPENDENT 7-CYANO-7-DEAZAGUANINE REDUCTASE"/>
    <property type="match status" value="1"/>
</dbReference>
<dbReference type="Pfam" id="PF14489">
    <property type="entry name" value="QueF"/>
    <property type="match status" value="1"/>
</dbReference>
<dbReference type="PIRSF" id="PIRSF027377">
    <property type="entry name" value="Nitrile_oxidored_QueF"/>
    <property type="match status" value="1"/>
</dbReference>
<dbReference type="SUPFAM" id="SSF55620">
    <property type="entry name" value="Tetrahydrobiopterin biosynthesis enzymes-like"/>
    <property type="match status" value="1"/>
</dbReference>
<name>QUEF_RHILW</name>
<sequence>MPNTDVSSLSMLGQQTETAQSPEQAVLEKVPSNHAGTDYVVRFTAPEFTSLCPMTGQPDFAHIVIDYIPGEWLVESKSLKLFLHSFRNHGAFHEDCSIYIAKRIVELLDPKWLRIGAYWYPRGGIPIDVFWQTGKPPEGVWLPEQGVATYRGRG</sequence>
<proteinExistence type="inferred from homology"/>
<feature type="chain" id="PRO_1000134310" description="NADPH-dependent 7-cyano-7-deazaguanine reductase">
    <location>
        <begin position="1"/>
        <end position="154"/>
    </location>
</feature>
<feature type="region of interest" description="Disordered" evidence="2">
    <location>
        <begin position="1"/>
        <end position="26"/>
    </location>
</feature>
<feature type="compositionally biased region" description="Polar residues" evidence="2">
    <location>
        <begin position="1"/>
        <end position="23"/>
    </location>
</feature>
<feature type="active site" description="Thioimide intermediate" evidence="1">
    <location>
        <position position="52"/>
    </location>
</feature>
<feature type="active site" description="Proton donor" evidence="1">
    <location>
        <position position="59"/>
    </location>
</feature>
<feature type="binding site" evidence="1">
    <location>
        <begin position="74"/>
        <end position="76"/>
    </location>
    <ligand>
        <name>substrate</name>
    </ligand>
</feature>
<feature type="binding site" evidence="1">
    <location>
        <begin position="93"/>
        <end position="94"/>
    </location>
    <ligand>
        <name>substrate</name>
    </ligand>
</feature>
<reference key="1">
    <citation type="journal article" date="2010" name="Stand. Genomic Sci.">
        <title>Complete genome sequence of Rhizobium leguminosarum bv trifolii strain WSM2304, an effective microsymbiont of the South American clover Trifolium polymorphum.</title>
        <authorList>
            <person name="Reeve W."/>
            <person name="O'Hara G."/>
            <person name="Chain P."/>
            <person name="Ardley J."/>
            <person name="Brau L."/>
            <person name="Nandesena K."/>
            <person name="Tiwari R."/>
            <person name="Malfatti S."/>
            <person name="Kiss H."/>
            <person name="Lapidus A."/>
            <person name="Copeland A."/>
            <person name="Nolan M."/>
            <person name="Land M."/>
            <person name="Ivanova N."/>
            <person name="Mavromatis K."/>
            <person name="Markowitz V."/>
            <person name="Kyrpides N."/>
            <person name="Melino V."/>
            <person name="Denton M."/>
            <person name="Yates R."/>
            <person name="Howieson J."/>
        </authorList>
    </citation>
    <scope>NUCLEOTIDE SEQUENCE [LARGE SCALE GENOMIC DNA]</scope>
    <source>
        <strain>WSM2304</strain>
    </source>
</reference>